<organism>
    <name type="scientific">Wigglesworthia glossinidia brevipalpis</name>
    <dbReference type="NCBI Taxonomy" id="36870"/>
    <lineage>
        <taxon>Bacteria</taxon>
        <taxon>Pseudomonadati</taxon>
        <taxon>Pseudomonadota</taxon>
        <taxon>Gammaproteobacteria</taxon>
        <taxon>Enterobacterales</taxon>
        <taxon>Erwiniaceae</taxon>
        <taxon>Wigglesworthia</taxon>
    </lineage>
</organism>
<dbReference type="EMBL" id="BA000021">
    <property type="protein sequence ID" value="BAC24286.1"/>
    <property type="molecule type" value="Genomic_DNA"/>
</dbReference>
<dbReference type="SMR" id="Q8D361"/>
<dbReference type="STRING" id="36870.gene:10368628"/>
<dbReference type="KEGG" id="wbr:rplM"/>
<dbReference type="eggNOG" id="COG0102">
    <property type="taxonomic scope" value="Bacteria"/>
</dbReference>
<dbReference type="HOGENOM" id="CLU_082184_2_2_6"/>
<dbReference type="OrthoDB" id="9801330at2"/>
<dbReference type="Proteomes" id="UP000000562">
    <property type="component" value="Chromosome"/>
</dbReference>
<dbReference type="GO" id="GO:0022625">
    <property type="term" value="C:cytosolic large ribosomal subunit"/>
    <property type="evidence" value="ECO:0007669"/>
    <property type="project" value="TreeGrafter"/>
</dbReference>
<dbReference type="GO" id="GO:0003729">
    <property type="term" value="F:mRNA binding"/>
    <property type="evidence" value="ECO:0007669"/>
    <property type="project" value="TreeGrafter"/>
</dbReference>
<dbReference type="GO" id="GO:0003735">
    <property type="term" value="F:structural constituent of ribosome"/>
    <property type="evidence" value="ECO:0007669"/>
    <property type="project" value="InterPro"/>
</dbReference>
<dbReference type="GO" id="GO:0017148">
    <property type="term" value="P:negative regulation of translation"/>
    <property type="evidence" value="ECO:0007669"/>
    <property type="project" value="TreeGrafter"/>
</dbReference>
<dbReference type="GO" id="GO:0006412">
    <property type="term" value="P:translation"/>
    <property type="evidence" value="ECO:0007669"/>
    <property type="project" value="UniProtKB-UniRule"/>
</dbReference>
<dbReference type="CDD" id="cd00392">
    <property type="entry name" value="Ribosomal_L13"/>
    <property type="match status" value="1"/>
</dbReference>
<dbReference type="FunFam" id="3.90.1180.10:FF:000001">
    <property type="entry name" value="50S ribosomal protein L13"/>
    <property type="match status" value="1"/>
</dbReference>
<dbReference type="Gene3D" id="3.90.1180.10">
    <property type="entry name" value="Ribosomal protein L13"/>
    <property type="match status" value="1"/>
</dbReference>
<dbReference type="HAMAP" id="MF_01366">
    <property type="entry name" value="Ribosomal_uL13"/>
    <property type="match status" value="1"/>
</dbReference>
<dbReference type="InterPro" id="IPR005822">
    <property type="entry name" value="Ribosomal_uL13"/>
</dbReference>
<dbReference type="InterPro" id="IPR005823">
    <property type="entry name" value="Ribosomal_uL13_bac-type"/>
</dbReference>
<dbReference type="InterPro" id="IPR023563">
    <property type="entry name" value="Ribosomal_uL13_CS"/>
</dbReference>
<dbReference type="InterPro" id="IPR036899">
    <property type="entry name" value="Ribosomal_uL13_sf"/>
</dbReference>
<dbReference type="NCBIfam" id="TIGR01066">
    <property type="entry name" value="rplM_bact"/>
    <property type="match status" value="1"/>
</dbReference>
<dbReference type="PANTHER" id="PTHR11545:SF2">
    <property type="entry name" value="LARGE RIBOSOMAL SUBUNIT PROTEIN UL13M"/>
    <property type="match status" value="1"/>
</dbReference>
<dbReference type="PANTHER" id="PTHR11545">
    <property type="entry name" value="RIBOSOMAL PROTEIN L13"/>
    <property type="match status" value="1"/>
</dbReference>
<dbReference type="Pfam" id="PF00572">
    <property type="entry name" value="Ribosomal_L13"/>
    <property type="match status" value="1"/>
</dbReference>
<dbReference type="PIRSF" id="PIRSF002181">
    <property type="entry name" value="Ribosomal_L13"/>
    <property type="match status" value="1"/>
</dbReference>
<dbReference type="SUPFAM" id="SSF52161">
    <property type="entry name" value="Ribosomal protein L13"/>
    <property type="match status" value="1"/>
</dbReference>
<dbReference type="PROSITE" id="PS00783">
    <property type="entry name" value="RIBOSOMAL_L13"/>
    <property type="match status" value="1"/>
</dbReference>
<evidence type="ECO:0000255" key="1">
    <source>
        <dbReference type="HAMAP-Rule" id="MF_01366"/>
    </source>
</evidence>
<evidence type="ECO:0000305" key="2"/>
<protein>
    <recommendedName>
        <fullName evidence="1">Large ribosomal subunit protein uL13</fullName>
    </recommendedName>
    <alternativeName>
        <fullName evidence="2">50S ribosomal protein L13</fullName>
    </alternativeName>
</protein>
<keyword id="KW-1185">Reference proteome</keyword>
<keyword id="KW-0687">Ribonucleoprotein</keyword>
<keyword id="KW-0689">Ribosomal protein</keyword>
<comment type="function">
    <text evidence="1">This protein is one of the early assembly proteins of the 50S ribosomal subunit, although it is not seen to bind rRNA by itself. It is important during the early stages of 50S assembly.</text>
</comment>
<comment type="subunit">
    <text evidence="1">Part of the 50S ribosomal subunit.</text>
</comment>
<comment type="similarity">
    <text evidence="1">Belongs to the universal ribosomal protein uL13 family.</text>
</comment>
<reference key="1">
    <citation type="journal article" date="2002" name="Nat. Genet.">
        <title>Genome sequence of the endocellular obligate symbiont of tsetse flies, Wigglesworthia glossinidia.</title>
        <authorList>
            <person name="Akman L."/>
            <person name="Yamashita A."/>
            <person name="Watanabe H."/>
            <person name="Oshima K."/>
            <person name="Shiba T."/>
            <person name="Hattori M."/>
            <person name="Aksoy S."/>
        </authorList>
    </citation>
    <scope>NUCLEOTIDE SEQUENCE [LARGE SCALE GENOMIC DNA]</scope>
</reference>
<proteinExistence type="inferred from homology"/>
<gene>
    <name evidence="1" type="primary">rplM</name>
    <name type="ordered locus">WIGBR1400</name>
</gene>
<name>RL13_WIGBR</name>
<accession>Q8D361</accession>
<feature type="chain" id="PRO_1000073418" description="Large ribosomal subunit protein uL13">
    <location>
        <begin position="1"/>
        <end position="142"/>
    </location>
</feature>
<sequence>MKTFMLKKNIARQNWHIFDAKNKILGRFSTKLASILKGKNDITYTPHVDSGNYVIVINSKKIKITGKKLKNKFYYHHTGYSGGIKKISLENMIKNNSELVIYKSVKGMLPKGSLGRVMIKKLKIFSGESHNHEAQKPKKLLT</sequence>